<evidence type="ECO:0000255" key="1">
    <source>
        <dbReference type="HAMAP-Rule" id="MF_00281"/>
    </source>
</evidence>
<sequence>MSEQQTMSELKQQALVDINEANDERALQEVKVKYLGKKGSVSGLMKLMKDLPNEDKPAFGQKVNELRQTIQNELDERQQMLVKEKLNKQLAEETIDVSLPGRHIEIGSKHPLTRTIEEIEDLFLGLGYEIVNGYEVEQDHYNFEMLNLPKSHPARDMQDSFYITDEILLRTHTSPVQARTMESRHGQGPVKIICPGKVYRRDSDDATHSHQFTQIEGLVVDKNVKMSDLKGTLELLAKKLFGADREIRLRPSYFPFTEPSVEVDVSCFKCKGKGCNVCKHTGWIEILGAGMVHPNVLEMAGFDSSEYSGFAFGMGPDRIAMLKYGIEDIRHFYTNDVRFLDQFKAVEDRGDM</sequence>
<gene>
    <name evidence="1" type="primary">pheS</name>
    <name type="ordered locus">SAOUHSC_01092</name>
</gene>
<keyword id="KW-0030">Aminoacyl-tRNA synthetase</keyword>
<keyword id="KW-0067">ATP-binding</keyword>
<keyword id="KW-0963">Cytoplasm</keyword>
<keyword id="KW-0436">Ligase</keyword>
<keyword id="KW-0460">Magnesium</keyword>
<keyword id="KW-0479">Metal-binding</keyword>
<keyword id="KW-0547">Nucleotide-binding</keyword>
<keyword id="KW-0648">Protein biosynthesis</keyword>
<keyword id="KW-1185">Reference proteome</keyword>
<organism>
    <name type="scientific">Staphylococcus aureus (strain NCTC 8325 / PS 47)</name>
    <dbReference type="NCBI Taxonomy" id="93061"/>
    <lineage>
        <taxon>Bacteria</taxon>
        <taxon>Bacillati</taxon>
        <taxon>Bacillota</taxon>
        <taxon>Bacilli</taxon>
        <taxon>Bacillales</taxon>
        <taxon>Staphylococcaceae</taxon>
        <taxon>Staphylococcus</taxon>
    </lineage>
</organism>
<feature type="chain" id="PRO_1000006907" description="Phenylalanine--tRNA ligase alpha subunit">
    <location>
        <begin position="1"/>
        <end position="352"/>
    </location>
</feature>
<feature type="binding site" evidence="1">
    <location>
        <position position="258"/>
    </location>
    <ligand>
        <name>Mg(2+)</name>
        <dbReference type="ChEBI" id="CHEBI:18420"/>
        <note>shared with beta subunit</note>
    </ligand>
</feature>
<proteinExistence type="inferred from homology"/>
<comment type="catalytic activity">
    <reaction evidence="1">
        <text>tRNA(Phe) + L-phenylalanine + ATP = L-phenylalanyl-tRNA(Phe) + AMP + diphosphate + H(+)</text>
        <dbReference type="Rhea" id="RHEA:19413"/>
        <dbReference type="Rhea" id="RHEA-COMP:9668"/>
        <dbReference type="Rhea" id="RHEA-COMP:9699"/>
        <dbReference type="ChEBI" id="CHEBI:15378"/>
        <dbReference type="ChEBI" id="CHEBI:30616"/>
        <dbReference type="ChEBI" id="CHEBI:33019"/>
        <dbReference type="ChEBI" id="CHEBI:58095"/>
        <dbReference type="ChEBI" id="CHEBI:78442"/>
        <dbReference type="ChEBI" id="CHEBI:78531"/>
        <dbReference type="ChEBI" id="CHEBI:456215"/>
        <dbReference type="EC" id="6.1.1.20"/>
    </reaction>
</comment>
<comment type="cofactor">
    <cofactor evidence="1">
        <name>Mg(2+)</name>
        <dbReference type="ChEBI" id="CHEBI:18420"/>
    </cofactor>
    <text evidence="1">Binds 2 magnesium ions per tetramer.</text>
</comment>
<comment type="subunit">
    <text evidence="1">Tetramer of two alpha and two beta subunits.</text>
</comment>
<comment type="subcellular location">
    <subcellularLocation>
        <location evidence="1">Cytoplasm</location>
    </subcellularLocation>
</comment>
<comment type="similarity">
    <text evidence="1">Belongs to the class-II aminoacyl-tRNA synthetase family. Phe-tRNA synthetase alpha subunit type 1 subfamily.</text>
</comment>
<reference key="1">
    <citation type="book" date="2006" name="Gram positive pathogens, 2nd edition">
        <title>The Staphylococcus aureus NCTC 8325 genome.</title>
        <editorList>
            <person name="Fischetti V."/>
            <person name="Novick R."/>
            <person name="Ferretti J."/>
            <person name="Portnoy D."/>
            <person name="Rood J."/>
        </editorList>
        <authorList>
            <person name="Gillaspy A.F."/>
            <person name="Worrell V."/>
            <person name="Orvis J."/>
            <person name="Roe B.A."/>
            <person name="Dyer D.W."/>
            <person name="Iandolo J.J."/>
        </authorList>
    </citation>
    <scope>NUCLEOTIDE SEQUENCE [LARGE SCALE GENOMIC DNA]</scope>
    <source>
        <strain>NCTC 8325 / PS 47</strain>
    </source>
</reference>
<name>SYFA_STAA8</name>
<protein>
    <recommendedName>
        <fullName evidence="1">Phenylalanine--tRNA ligase alpha subunit</fullName>
        <ecNumber evidence="1">6.1.1.20</ecNumber>
    </recommendedName>
    <alternativeName>
        <fullName evidence="1">Phenylalanyl-tRNA synthetase alpha subunit</fullName>
        <shortName evidence="1">PheRS</shortName>
    </alternativeName>
</protein>
<dbReference type="EC" id="6.1.1.20" evidence="1"/>
<dbReference type="EMBL" id="CP000253">
    <property type="protein sequence ID" value="ABD30207.1"/>
    <property type="molecule type" value="Genomic_DNA"/>
</dbReference>
<dbReference type="RefSeq" id="WP_000003559.1">
    <property type="nucleotide sequence ID" value="NZ_LS483365.1"/>
</dbReference>
<dbReference type="RefSeq" id="YP_499637.1">
    <property type="nucleotide sequence ID" value="NC_007795.1"/>
</dbReference>
<dbReference type="SMR" id="Q2FZD9"/>
<dbReference type="STRING" id="93061.SAOUHSC_01092"/>
<dbReference type="PaxDb" id="1280-SAXN108_1133"/>
<dbReference type="GeneID" id="3919253"/>
<dbReference type="KEGG" id="sao:SAOUHSC_01092"/>
<dbReference type="PATRIC" id="fig|93061.5.peg.1001"/>
<dbReference type="eggNOG" id="COG0016">
    <property type="taxonomic scope" value="Bacteria"/>
</dbReference>
<dbReference type="HOGENOM" id="CLU_025086_0_1_9"/>
<dbReference type="OrthoDB" id="9800719at2"/>
<dbReference type="PRO" id="PR:Q2FZD9"/>
<dbReference type="Proteomes" id="UP000008816">
    <property type="component" value="Chromosome"/>
</dbReference>
<dbReference type="GO" id="GO:0005737">
    <property type="term" value="C:cytoplasm"/>
    <property type="evidence" value="ECO:0000318"/>
    <property type="project" value="GO_Central"/>
</dbReference>
<dbReference type="GO" id="GO:0005524">
    <property type="term" value="F:ATP binding"/>
    <property type="evidence" value="ECO:0007669"/>
    <property type="project" value="UniProtKB-UniRule"/>
</dbReference>
<dbReference type="GO" id="GO:0140096">
    <property type="term" value="F:catalytic activity, acting on a protein"/>
    <property type="evidence" value="ECO:0007669"/>
    <property type="project" value="UniProtKB-ARBA"/>
</dbReference>
<dbReference type="GO" id="GO:0000287">
    <property type="term" value="F:magnesium ion binding"/>
    <property type="evidence" value="ECO:0007669"/>
    <property type="project" value="UniProtKB-UniRule"/>
</dbReference>
<dbReference type="GO" id="GO:0004826">
    <property type="term" value="F:phenylalanine-tRNA ligase activity"/>
    <property type="evidence" value="ECO:0000318"/>
    <property type="project" value="GO_Central"/>
</dbReference>
<dbReference type="GO" id="GO:0016740">
    <property type="term" value="F:transferase activity"/>
    <property type="evidence" value="ECO:0007669"/>
    <property type="project" value="UniProtKB-ARBA"/>
</dbReference>
<dbReference type="GO" id="GO:0000049">
    <property type="term" value="F:tRNA binding"/>
    <property type="evidence" value="ECO:0007669"/>
    <property type="project" value="InterPro"/>
</dbReference>
<dbReference type="GO" id="GO:0006432">
    <property type="term" value="P:phenylalanyl-tRNA aminoacylation"/>
    <property type="evidence" value="ECO:0000318"/>
    <property type="project" value="GO_Central"/>
</dbReference>
<dbReference type="CDD" id="cd00496">
    <property type="entry name" value="PheRS_alpha_core"/>
    <property type="match status" value="1"/>
</dbReference>
<dbReference type="FunFam" id="3.30.930.10:FF:000003">
    <property type="entry name" value="Phenylalanine--tRNA ligase alpha subunit"/>
    <property type="match status" value="1"/>
</dbReference>
<dbReference type="Gene3D" id="3.30.930.10">
    <property type="entry name" value="Bira Bifunctional Protein, Domain 2"/>
    <property type="match status" value="1"/>
</dbReference>
<dbReference type="HAMAP" id="MF_00281">
    <property type="entry name" value="Phe_tRNA_synth_alpha1"/>
    <property type="match status" value="1"/>
</dbReference>
<dbReference type="InterPro" id="IPR006195">
    <property type="entry name" value="aa-tRNA-synth_II"/>
</dbReference>
<dbReference type="InterPro" id="IPR045864">
    <property type="entry name" value="aa-tRNA-synth_II/BPL/LPL"/>
</dbReference>
<dbReference type="InterPro" id="IPR004529">
    <property type="entry name" value="Phe-tRNA-synth_IIc_asu"/>
</dbReference>
<dbReference type="InterPro" id="IPR004188">
    <property type="entry name" value="Phe-tRNA_ligase_II_N"/>
</dbReference>
<dbReference type="InterPro" id="IPR022911">
    <property type="entry name" value="Phe_tRNA_ligase_alpha1_bac"/>
</dbReference>
<dbReference type="InterPro" id="IPR002319">
    <property type="entry name" value="Phenylalanyl-tRNA_Synthase"/>
</dbReference>
<dbReference type="InterPro" id="IPR010978">
    <property type="entry name" value="tRNA-bd_arm"/>
</dbReference>
<dbReference type="NCBIfam" id="TIGR00468">
    <property type="entry name" value="pheS"/>
    <property type="match status" value="1"/>
</dbReference>
<dbReference type="PANTHER" id="PTHR11538:SF41">
    <property type="entry name" value="PHENYLALANINE--TRNA LIGASE, MITOCHONDRIAL"/>
    <property type="match status" value="1"/>
</dbReference>
<dbReference type="PANTHER" id="PTHR11538">
    <property type="entry name" value="PHENYLALANYL-TRNA SYNTHETASE"/>
    <property type="match status" value="1"/>
</dbReference>
<dbReference type="Pfam" id="PF02912">
    <property type="entry name" value="Phe_tRNA-synt_N"/>
    <property type="match status" value="1"/>
</dbReference>
<dbReference type="Pfam" id="PF01409">
    <property type="entry name" value="tRNA-synt_2d"/>
    <property type="match status" value="1"/>
</dbReference>
<dbReference type="SUPFAM" id="SSF55681">
    <property type="entry name" value="Class II aaRS and biotin synthetases"/>
    <property type="match status" value="1"/>
</dbReference>
<dbReference type="SUPFAM" id="SSF46589">
    <property type="entry name" value="tRNA-binding arm"/>
    <property type="match status" value="1"/>
</dbReference>
<dbReference type="PROSITE" id="PS50862">
    <property type="entry name" value="AA_TRNA_LIGASE_II"/>
    <property type="match status" value="1"/>
</dbReference>
<accession>Q2FZD9</accession>